<evidence type="ECO:0000255" key="1">
    <source>
        <dbReference type="HAMAP-Rule" id="MF_00004"/>
    </source>
</evidence>
<organism>
    <name type="scientific">Ruegeria pomeroyi (strain ATCC 700808 / DSM 15171 / DSS-3)</name>
    <name type="common">Silicibacter pomeroyi</name>
    <dbReference type="NCBI Taxonomy" id="246200"/>
    <lineage>
        <taxon>Bacteria</taxon>
        <taxon>Pseudomonadati</taxon>
        <taxon>Pseudomonadota</taxon>
        <taxon>Alphaproteobacteria</taxon>
        <taxon>Rhodobacterales</taxon>
        <taxon>Roseobacteraceae</taxon>
        <taxon>Ruegeria</taxon>
    </lineage>
</organism>
<dbReference type="EC" id="2.4.2.7" evidence="1"/>
<dbReference type="EMBL" id="CP000031">
    <property type="protein sequence ID" value="AAV96301.1"/>
    <property type="molecule type" value="Genomic_DNA"/>
</dbReference>
<dbReference type="RefSeq" id="WP_011048759.1">
    <property type="nucleotide sequence ID" value="NC_003911.12"/>
</dbReference>
<dbReference type="SMR" id="Q5LNY7"/>
<dbReference type="STRING" id="246200.SPO3066"/>
<dbReference type="PaxDb" id="246200-SPO3066"/>
<dbReference type="KEGG" id="sil:SPO3066"/>
<dbReference type="eggNOG" id="COG0503">
    <property type="taxonomic scope" value="Bacteria"/>
</dbReference>
<dbReference type="HOGENOM" id="CLU_063339_3_0_5"/>
<dbReference type="OrthoDB" id="9803963at2"/>
<dbReference type="UniPathway" id="UPA00588">
    <property type="reaction ID" value="UER00646"/>
</dbReference>
<dbReference type="Proteomes" id="UP000001023">
    <property type="component" value="Chromosome"/>
</dbReference>
<dbReference type="GO" id="GO:0005737">
    <property type="term" value="C:cytoplasm"/>
    <property type="evidence" value="ECO:0007669"/>
    <property type="project" value="UniProtKB-SubCell"/>
</dbReference>
<dbReference type="GO" id="GO:0002055">
    <property type="term" value="F:adenine binding"/>
    <property type="evidence" value="ECO:0007669"/>
    <property type="project" value="TreeGrafter"/>
</dbReference>
<dbReference type="GO" id="GO:0003999">
    <property type="term" value="F:adenine phosphoribosyltransferase activity"/>
    <property type="evidence" value="ECO:0007669"/>
    <property type="project" value="UniProtKB-UniRule"/>
</dbReference>
<dbReference type="GO" id="GO:0016208">
    <property type="term" value="F:AMP binding"/>
    <property type="evidence" value="ECO:0007669"/>
    <property type="project" value="TreeGrafter"/>
</dbReference>
<dbReference type="GO" id="GO:0006168">
    <property type="term" value="P:adenine salvage"/>
    <property type="evidence" value="ECO:0007669"/>
    <property type="project" value="InterPro"/>
</dbReference>
<dbReference type="GO" id="GO:0044209">
    <property type="term" value="P:AMP salvage"/>
    <property type="evidence" value="ECO:0007669"/>
    <property type="project" value="UniProtKB-UniRule"/>
</dbReference>
<dbReference type="GO" id="GO:0006166">
    <property type="term" value="P:purine ribonucleoside salvage"/>
    <property type="evidence" value="ECO:0007669"/>
    <property type="project" value="UniProtKB-KW"/>
</dbReference>
<dbReference type="CDD" id="cd06223">
    <property type="entry name" value="PRTases_typeI"/>
    <property type="match status" value="1"/>
</dbReference>
<dbReference type="FunFam" id="3.40.50.2020:FF:000021">
    <property type="entry name" value="Adenine phosphoribosyltransferase"/>
    <property type="match status" value="1"/>
</dbReference>
<dbReference type="Gene3D" id="3.40.50.2020">
    <property type="match status" value="1"/>
</dbReference>
<dbReference type="HAMAP" id="MF_00004">
    <property type="entry name" value="Aden_phosphoribosyltr"/>
    <property type="match status" value="1"/>
</dbReference>
<dbReference type="InterPro" id="IPR005764">
    <property type="entry name" value="Ade_phspho_trans"/>
</dbReference>
<dbReference type="InterPro" id="IPR000836">
    <property type="entry name" value="PRibTrfase_dom"/>
</dbReference>
<dbReference type="InterPro" id="IPR029057">
    <property type="entry name" value="PRTase-like"/>
</dbReference>
<dbReference type="InterPro" id="IPR050054">
    <property type="entry name" value="UPRTase/APRTase"/>
</dbReference>
<dbReference type="NCBIfam" id="TIGR01090">
    <property type="entry name" value="apt"/>
    <property type="match status" value="1"/>
</dbReference>
<dbReference type="NCBIfam" id="NF002634">
    <property type="entry name" value="PRK02304.1-3"/>
    <property type="match status" value="1"/>
</dbReference>
<dbReference type="NCBIfam" id="NF002636">
    <property type="entry name" value="PRK02304.1-5"/>
    <property type="match status" value="1"/>
</dbReference>
<dbReference type="PANTHER" id="PTHR32315">
    <property type="entry name" value="ADENINE PHOSPHORIBOSYLTRANSFERASE"/>
    <property type="match status" value="1"/>
</dbReference>
<dbReference type="PANTHER" id="PTHR32315:SF3">
    <property type="entry name" value="ADENINE PHOSPHORIBOSYLTRANSFERASE"/>
    <property type="match status" value="1"/>
</dbReference>
<dbReference type="Pfam" id="PF00156">
    <property type="entry name" value="Pribosyltran"/>
    <property type="match status" value="1"/>
</dbReference>
<dbReference type="SUPFAM" id="SSF53271">
    <property type="entry name" value="PRTase-like"/>
    <property type="match status" value="1"/>
</dbReference>
<dbReference type="PROSITE" id="PS00103">
    <property type="entry name" value="PUR_PYR_PR_TRANSFER"/>
    <property type="match status" value="1"/>
</dbReference>
<reference key="1">
    <citation type="journal article" date="2004" name="Nature">
        <title>Genome sequence of Silicibacter pomeroyi reveals adaptations to the marine environment.</title>
        <authorList>
            <person name="Moran M.A."/>
            <person name="Buchan A."/>
            <person name="Gonzalez J.M."/>
            <person name="Heidelberg J.F."/>
            <person name="Whitman W.B."/>
            <person name="Kiene R.P."/>
            <person name="Henriksen J.R."/>
            <person name="King G.M."/>
            <person name="Belas R."/>
            <person name="Fuqua C."/>
            <person name="Brinkac L.M."/>
            <person name="Lewis M."/>
            <person name="Johri S."/>
            <person name="Weaver B."/>
            <person name="Pai G."/>
            <person name="Eisen J.A."/>
            <person name="Rahe E."/>
            <person name="Sheldon W.M."/>
            <person name="Ye W."/>
            <person name="Miller T.R."/>
            <person name="Carlton J."/>
            <person name="Rasko D.A."/>
            <person name="Paulsen I.T."/>
            <person name="Ren Q."/>
            <person name="Daugherty S.C."/>
            <person name="DeBoy R.T."/>
            <person name="Dodson R.J."/>
            <person name="Durkin A.S."/>
            <person name="Madupu R."/>
            <person name="Nelson W.C."/>
            <person name="Sullivan S.A."/>
            <person name="Rosovitz M.J."/>
            <person name="Haft D.H."/>
            <person name="Selengut J."/>
            <person name="Ward N."/>
        </authorList>
    </citation>
    <scope>NUCLEOTIDE SEQUENCE [LARGE SCALE GENOMIC DNA]</scope>
    <source>
        <strain>ATCC 700808 / DSM 15171 / DSS-3</strain>
    </source>
</reference>
<reference key="2">
    <citation type="journal article" date="2014" name="Stand. Genomic Sci.">
        <title>An updated genome annotation for the model marine bacterium Ruegeria pomeroyi DSS-3.</title>
        <authorList>
            <person name="Rivers A.R."/>
            <person name="Smith C.B."/>
            <person name="Moran M.A."/>
        </authorList>
    </citation>
    <scope>GENOME REANNOTATION</scope>
    <source>
        <strain>ATCC 700808 / DSM 15171 / DSS-3</strain>
    </source>
</reference>
<name>APT_RUEPO</name>
<proteinExistence type="inferred from homology"/>
<gene>
    <name evidence="1" type="primary">apt</name>
    <name type="ordered locus">SPO3066</name>
</gene>
<comment type="function">
    <text evidence="1">Catalyzes a salvage reaction resulting in the formation of AMP, that is energically less costly than de novo synthesis.</text>
</comment>
<comment type="catalytic activity">
    <reaction evidence="1">
        <text>AMP + diphosphate = 5-phospho-alpha-D-ribose 1-diphosphate + adenine</text>
        <dbReference type="Rhea" id="RHEA:16609"/>
        <dbReference type="ChEBI" id="CHEBI:16708"/>
        <dbReference type="ChEBI" id="CHEBI:33019"/>
        <dbReference type="ChEBI" id="CHEBI:58017"/>
        <dbReference type="ChEBI" id="CHEBI:456215"/>
        <dbReference type="EC" id="2.4.2.7"/>
    </reaction>
</comment>
<comment type="pathway">
    <text evidence="1">Purine metabolism; AMP biosynthesis via salvage pathway; AMP from adenine: step 1/1.</text>
</comment>
<comment type="subunit">
    <text evidence="1">Homodimer.</text>
</comment>
<comment type="subcellular location">
    <subcellularLocation>
        <location evidence="1">Cytoplasm</location>
    </subcellularLocation>
</comment>
<comment type="similarity">
    <text evidence="1">Belongs to the purine/pyrimidine phosphoribosyltransferase family.</text>
</comment>
<feature type="chain" id="PRO_0000149448" description="Adenine phosphoribosyltransferase">
    <location>
        <begin position="1"/>
        <end position="179"/>
    </location>
</feature>
<accession>Q5LNY7</accession>
<sequence>MSRTKSVQDYIRTIVDFPHEGILFRDVTTLFADPRGFRIAIDQMLHPYAGERIDKVVGLEARGFILGGAIAHQLSVGFVPIRKKGKLPGTTISQDYKLEYGEAIVEIHDDAIQPGEKILLVDDLLATGGTAAAGIKLVERLGGEIVSCAFIIDLPDLGGRKVLESMGMDVHALCAFDGL</sequence>
<keyword id="KW-0963">Cytoplasm</keyword>
<keyword id="KW-0328">Glycosyltransferase</keyword>
<keyword id="KW-0660">Purine salvage</keyword>
<keyword id="KW-1185">Reference proteome</keyword>
<keyword id="KW-0808">Transferase</keyword>
<protein>
    <recommendedName>
        <fullName evidence="1">Adenine phosphoribosyltransferase</fullName>
        <shortName evidence="1">APRT</shortName>
        <ecNumber evidence="1">2.4.2.7</ecNumber>
    </recommendedName>
</protein>